<name>PSBL_CUCSA</name>
<gene>
    <name evidence="1" type="primary">psbL</name>
    <name type="ordered locus">CsCp055</name>
</gene>
<feature type="chain" id="PRO_0000276204" description="Photosystem II reaction center protein L">
    <location>
        <begin position="1"/>
        <end position="38"/>
    </location>
</feature>
<feature type="transmembrane region" description="Helical" evidence="1">
    <location>
        <begin position="17"/>
        <end position="37"/>
    </location>
</feature>
<reference key="1">
    <citation type="journal article" date="2006" name="Plant Cell Rep.">
        <title>Complete sequence and organization of the cucumber (Cucumis sativus L. cv. Baekmibaekdadagi) chloroplast genome.</title>
        <authorList>
            <person name="Kim J.-S."/>
            <person name="Jung J.D."/>
            <person name="Lee J.-A."/>
            <person name="Park H.-W."/>
            <person name="Oh K.-H."/>
            <person name="Jeong W.J."/>
            <person name="Choi D.-W."/>
            <person name="Liu J.R."/>
            <person name="Cho K.Y."/>
        </authorList>
    </citation>
    <scope>NUCLEOTIDE SEQUENCE [LARGE SCALE GENOMIC DNA]</scope>
    <source>
        <strain>cv. Baekmibaekdadagi</strain>
    </source>
</reference>
<reference key="2">
    <citation type="journal article" date="2007" name="Cell. Mol. Biol. Lett.">
        <title>The complete structure of the cucumber (Cucumis sativus L.) chloroplast genome: its composition and comparative analysis.</title>
        <authorList>
            <person name="Plader W.W."/>
            <person name="Yukawa Y."/>
            <person name="Sugiura M."/>
            <person name="Malepszy S."/>
        </authorList>
    </citation>
    <scope>NUCLEOTIDE SEQUENCE [LARGE SCALE GENOMIC DNA]</scope>
    <source>
        <strain>cv. Borszczagowski</strain>
    </source>
</reference>
<reference key="3">
    <citation type="journal article" date="2007" name="Genome">
        <title>Sequencing cucumber (Cucumis sativus L.) chloroplast genomes identifies differences between chilling-tolerant and -susceptible cucumber lines.</title>
        <authorList>
            <person name="Chung S.-M."/>
            <person name="Gordon V.S."/>
            <person name="Staub J.E."/>
        </authorList>
    </citation>
    <scope>NUCLEOTIDE SEQUENCE [LARGE SCALE GENOMIC DNA]</scope>
    <source>
        <strain>cv. Chipper</strain>
        <strain>cv. Gy14</strain>
    </source>
</reference>
<proteinExistence type="inferred from homology"/>
<protein>
    <recommendedName>
        <fullName evidence="1">Photosystem II reaction center protein L</fullName>
        <shortName evidence="1">PSII-L</shortName>
    </recommendedName>
</protein>
<dbReference type="EMBL" id="DQ119058">
    <property type="protein sequence ID" value="AAZ94666.1"/>
    <property type="molecule type" value="Genomic_DNA"/>
</dbReference>
<dbReference type="EMBL" id="AJ970307">
    <property type="protein sequence ID" value="CAJ00773.1"/>
    <property type="molecule type" value="Genomic_DNA"/>
</dbReference>
<dbReference type="EMBL" id="DQ865975">
    <property type="protein sequence ID" value="ABI97432.1"/>
    <property type="molecule type" value="Genomic_DNA"/>
</dbReference>
<dbReference type="EMBL" id="DQ865976">
    <property type="protein sequence ID" value="ABI98760.1"/>
    <property type="molecule type" value="Genomic_DNA"/>
</dbReference>
<dbReference type="RefSeq" id="YP_247614.1">
    <property type="nucleotide sequence ID" value="NC_007144.1"/>
</dbReference>
<dbReference type="SMR" id="Q4VZH7"/>
<dbReference type="GeneID" id="3429285"/>
<dbReference type="KEGG" id="csv:3429285"/>
<dbReference type="OrthoDB" id="99at2759"/>
<dbReference type="GO" id="GO:0009535">
    <property type="term" value="C:chloroplast thylakoid membrane"/>
    <property type="evidence" value="ECO:0007669"/>
    <property type="project" value="UniProtKB-SubCell"/>
</dbReference>
<dbReference type="GO" id="GO:0009539">
    <property type="term" value="C:photosystem II reaction center"/>
    <property type="evidence" value="ECO:0007669"/>
    <property type="project" value="InterPro"/>
</dbReference>
<dbReference type="GO" id="GO:0015979">
    <property type="term" value="P:photosynthesis"/>
    <property type="evidence" value="ECO:0007669"/>
    <property type="project" value="UniProtKB-UniRule"/>
</dbReference>
<dbReference type="HAMAP" id="MF_01317">
    <property type="entry name" value="PSII_PsbL"/>
    <property type="match status" value="1"/>
</dbReference>
<dbReference type="InterPro" id="IPR003372">
    <property type="entry name" value="PSII_PsbL"/>
</dbReference>
<dbReference type="InterPro" id="IPR037266">
    <property type="entry name" value="PSII_PsbL_sf"/>
</dbReference>
<dbReference type="NCBIfam" id="NF001972">
    <property type="entry name" value="PRK00753.1"/>
    <property type="match status" value="1"/>
</dbReference>
<dbReference type="Pfam" id="PF02419">
    <property type="entry name" value="PsbL"/>
    <property type="match status" value="1"/>
</dbReference>
<dbReference type="SUPFAM" id="SSF161017">
    <property type="entry name" value="Photosystem II reaction center protein L, PsbL"/>
    <property type="match status" value="1"/>
</dbReference>
<evidence type="ECO:0000255" key="1">
    <source>
        <dbReference type="HAMAP-Rule" id="MF_01317"/>
    </source>
</evidence>
<accession>Q4VZH7</accession>
<accession>A5J1U9</accession>
<comment type="function">
    <text evidence="1">One of the components of the core complex of photosystem II (PSII). PSII is a light-driven water:plastoquinone oxidoreductase that uses light energy to abstract electrons from H(2)O, generating O(2) and a proton gradient subsequently used for ATP formation. It consists of a core antenna complex that captures photons, and an electron transfer chain that converts photonic excitation into a charge separation. This subunit is found at the monomer-monomer interface and is required for correct PSII assembly and/or dimerization.</text>
</comment>
<comment type="subunit">
    <text evidence="1">PSII is composed of 1 copy each of membrane proteins PsbA, PsbB, PsbC, PsbD, PsbE, PsbF, PsbH, PsbI, PsbJ, PsbK, PsbL, PsbM, PsbT, PsbX, PsbY, PsbZ, Psb30/Ycf12, at least 3 peripheral proteins of the oxygen-evolving complex and a large number of cofactors. It forms dimeric complexes.</text>
</comment>
<comment type="subcellular location">
    <subcellularLocation>
        <location evidence="1">Plastid</location>
        <location evidence="1">Chloroplast thylakoid membrane</location>
        <topology evidence="1">Single-pass membrane protein</topology>
    </subcellularLocation>
</comment>
<comment type="similarity">
    <text evidence="1">Belongs to the PsbL family.</text>
</comment>
<organism>
    <name type="scientific">Cucumis sativus</name>
    <name type="common">Cucumber</name>
    <dbReference type="NCBI Taxonomy" id="3659"/>
    <lineage>
        <taxon>Eukaryota</taxon>
        <taxon>Viridiplantae</taxon>
        <taxon>Streptophyta</taxon>
        <taxon>Embryophyta</taxon>
        <taxon>Tracheophyta</taxon>
        <taxon>Spermatophyta</taxon>
        <taxon>Magnoliopsida</taxon>
        <taxon>eudicotyledons</taxon>
        <taxon>Gunneridae</taxon>
        <taxon>Pentapetalae</taxon>
        <taxon>rosids</taxon>
        <taxon>fabids</taxon>
        <taxon>Cucurbitales</taxon>
        <taxon>Cucurbitaceae</taxon>
        <taxon>Benincaseae</taxon>
        <taxon>Cucumis</taxon>
    </lineage>
</organism>
<keyword id="KW-0150">Chloroplast</keyword>
<keyword id="KW-0472">Membrane</keyword>
<keyword id="KW-0602">Photosynthesis</keyword>
<keyword id="KW-0604">Photosystem II</keyword>
<keyword id="KW-0934">Plastid</keyword>
<keyword id="KW-0674">Reaction center</keyword>
<keyword id="KW-0793">Thylakoid</keyword>
<keyword id="KW-0812">Transmembrane</keyword>
<keyword id="KW-1133">Transmembrane helix</keyword>
<sequence>MTQSNPNEQNVELNRTSLYWGLLLIFVLAVLFSNYFFN</sequence>
<geneLocation type="chloroplast"/>